<name>NDHI_MELLU</name>
<comment type="function">
    <text evidence="1">NDH shuttles electrons from NAD(P)H:plastoquinone, via FMN and iron-sulfur (Fe-S) centers, to quinones in the photosynthetic chain and possibly in a chloroplast respiratory chain. The immediate electron acceptor for the enzyme in this species is believed to be plastoquinone. Couples the redox reaction to proton translocation, and thus conserves the redox energy in a proton gradient.</text>
</comment>
<comment type="catalytic activity">
    <reaction evidence="1">
        <text>a plastoquinone + NADH + (n+1) H(+)(in) = a plastoquinol + NAD(+) + n H(+)(out)</text>
        <dbReference type="Rhea" id="RHEA:42608"/>
        <dbReference type="Rhea" id="RHEA-COMP:9561"/>
        <dbReference type="Rhea" id="RHEA-COMP:9562"/>
        <dbReference type="ChEBI" id="CHEBI:15378"/>
        <dbReference type="ChEBI" id="CHEBI:17757"/>
        <dbReference type="ChEBI" id="CHEBI:57540"/>
        <dbReference type="ChEBI" id="CHEBI:57945"/>
        <dbReference type="ChEBI" id="CHEBI:62192"/>
    </reaction>
</comment>
<comment type="catalytic activity">
    <reaction evidence="1">
        <text>a plastoquinone + NADPH + (n+1) H(+)(in) = a plastoquinol + NADP(+) + n H(+)(out)</text>
        <dbReference type="Rhea" id="RHEA:42612"/>
        <dbReference type="Rhea" id="RHEA-COMP:9561"/>
        <dbReference type="Rhea" id="RHEA-COMP:9562"/>
        <dbReference type="ChEBI" id="CHEBI:15378"/>
        <dbReference type="ChEBI" id="CHEBI:17757"/>
        <dbReference type="ChEBI" id="CHEBI:57783"/>
        <dbReference type="ChEBI" id="CHEBI:58349"/>
        <dbReference type="ChEBI" id="CHEBI:62192"/>
    </reaction>
</comment>
<comment type="cofactor">
    <cofactor evidence="1">
        <name>[4Fe-4S] cluster</name>
        <dbReference type="ChEBI" id="CHEBI:49883"/>
    </cofactor>
    <text evidence="1">Binds 2 [4Fe-4S] clusters per subunit.</text>
</comment>
<comment type="subunit">
    <text evidence="1">NDH is composed of at least 16 different subunits, 5 of which are encoded in the nucleus.</text>
</comment>
<comment type="subcellular location">
    <subcellularLocation>
        <location evidence="1">Plastid</location>
        <location evidence="1">Chloroplast thylakoid membrane</location>
        <topology evidence="1">Peripheral membrane protein</topology>
    </subcellularLocation>
</comment>
<comment type="similarity">
    <text evidence="1">Belongs to the complex I 23 kDa subunit family.</text>
</comment>
<feature type="chain" id="PRO_0000250815" description="NAD(P)H-quinone oxidoreductase subunit I, chloroplastic">
    <location>
        <begin position="1"/>
        <end position="166"/>
    </location>
</feature>
<feature type="domain" description="4Fe-4S ferredoxin-type 1" evidence="1">
    <location>
        <begin position="55"/>
        <end position="84"/>
    </location>
</feature>
<feature type="domain" description="4Fe-4S ferredoxin-type 2" evidence="1">
    <location>
        <begin position="95"/>
        <end position="124"/>
    </location>
</feature>
<feature type="binding site" evidence="1">
    <location>
        <position position="64"/>
    </location>
    <ligand>
        <name>[4Fe-4S] cluster</name>
        <dbReference type="ChEBI" id="CHEBI:49883"/>
        <label>1</label>
    </ligand>
</feature>
<feature type="binding site" evidence="1">
    <location>
        <position position="67"/>
    </location>
    <ligand>
        <name>[4Fe-4S] cluster</name>
        <dbReference type="ChEBI" id="CHEBI:49883"/>
        <label>1</label>
    </ligand>
</feature>
<feature type="binding site" evidence="1">
    <location>
        <position position="70"/>
    </location>
    <ligand>
        <name>[4Fe-4S] cluster</name>
        <dbReference type="ChEBI" id="CHEBI:49883"/>
        <label>1</label>
    </ligand>
</feature>
<feature type="binding site" evidence="1">
    <location>
        <position position="74"/>
    </location>
    <ligand>
        <name>[4Fe-4S] cluster</name>
        <dbReference type="ChEBI" id="CHEBI:49883"/>
        <label>2</label>
    </ligand>
</feature>
<feature type="binding site" evidence="1">
    <location>
        <position position="104"/>
    </location>
    <ligand>
        <name>[4Fe-4S] cluster</name>
        <dbReference type="ChEBI" id="CHEBI:49883"/>
        <label>2</label>
    </ligand>
</feature>
<feature type="binding site" evidence="1">
    <location>
        <position position="107"/>
    </location>
    <ligand>
        <name>[4Fe-4S] cluster</name>
        <dbReference type="ChEBI" id="CHEBI:49883"/>
        <label>2</label>
    </ligand>
</feature>
<feature type="binding site" evidence="1">
    <location>
        <position position="110"/>
    </location>
    <ligand>
        <name>[4Fe-4S] cluster</name>
        <dbReference type="ChEBI" id="CHEBI:49883"/>
        <label>2</label>
    </ligand>
</feature>
<feature type="binding site" evidence="1">
    <location>
        <position position="114"/>
    </location>
    <ligand>
        <name>[4Fe-4S] cluster</name>
        <dbReference type="ChEBI" id="CHEBI:49883"/>
        <label>1</label>
    </ligand>
</feature>
<geneLocation type="chloroplast"/>
<sequence length="166" mass="19462">MFPMVTEFMNYGQQTVRAARYIGQGFMITLSHANRLPVTIQYPYEKLITSERFRGRIHFEFDKCIACEVCVRVCPIDLPVVDWKLETDIRKKRLLNYSIDFGICIFCGNCVEYCPTNCLSMTEEYELSTYDRHELNYTQIALGRLPMSIIDDYTIRTILNLPEIKT</sequence>
<dbReference type="EC" id="7.1.1.-" evidence="1"/>
<dbReference type="EMBL" id="AF383817">
    <property type="protein sequence ID" value="AAN61758.1"/>
    <property type="molecule type" value="Genomic_DNA"/>
</dbReference>
<dbReference type="SMR" id="Q8HVP6"/>
<dbReference type="GO" id="GO:0009535">
    <property type="term" value="C:chloroplast thylakoid membrane"/>
    <property type="evidence" value="ECO:0007669"/>
    <property type="project" value="UniProtKB-SubCell"/>
</dbReference>
<dbReference type="GO" id="GO:0051539">
    <property type="term" value="F:4 iron, 4 sulfur cluster binding"/>
    <property type="evidence" value="ECO:0007669"/>
    <property type="project" value="UniProtKB-KW"/>
</dbReference>
<dbReference type="GO" id="GO:0005506">
    <property type="term" value="F:iron ion binding"/>
    <property type="evidence" value="ECO:0007669"/>
    <property type="project" value="UniProtKB-UniRule"/>
</dbReference>
<dbReference type="GO" id="GO:0008137">
    <property type="term" value="F:NADH dehydrogenase (ubiquinone) activity"/>
    <property type="evidence" value="ECO:0007669"/>
    <property type="project" value="InterPro"/>
</dbReference>
<dbReference type="GO" id="GO:0048038">
    <property type="term" value="F:quinone binding"/>
    <property type="evidence" value="ECO:0007669"/>
    <property type="project" value="UniProtKB-KW"/>
</dbReference>
<dbReference type="GO" id="GO:0019684">
    <property type="term" value="P:photosynthesis, light reaction"/>
    <property type="evidence" value="ECO:0007669"/>
    <property type="project" value="UniProtKB-UniRule"/>
</dbReference>
<dbReference type="FunFam" id="3.30.70.3270:FF:000006">
    <property type="entry name" value="NAD(P)H-quinone oxidoreductase subunit I, chloroplastic"/>
    <property type="match status" value="1"/>
</dbReference>
<dbReference type="Gene3D" id="3.30.70.3270">
    <property type="match status" value="1"/>
</dbReference>
<dbReference type="HAMAP" id="MF_01351">
    <property type="entry name" value="NDH1_NuoI"/>
    <property type="match status" value="1"/>
</dbReference>
<dbReference type="InterPro" id="IPR017896">
    <property type="entry name" value="4Fe4S_Fe-S-bd"/>
</dbReference>
<dbReference type="InterPro" id="IPR017900">
    <property type="entry name" value="4Fe4S_Fe_S_CS"/>
</dbReference>
<dbReference type="InterPro" id="IPR010226">
    <property type="entry name" value="NADH_quinone_OxRdtase_chainI"/>
</dbReference>
<dbReference type="InterPro" id="IPR004497">
    <property type="entry name" value="NDHI"/>
</dbReference>
<dbReference type="NCBIfam" id="TIGR00403">
    <property type="entry name" value="ndhI"/>
    <property type="match status" value="1"/>
</dbReference>
<dbReference type="NCBIfam" id="TIGR01971">
    <property type="entry name" value="NuoI"/>
    <property type="match status" value="1"/>
</dbReference>
<dbReference type="NCBIfam" id="NF004537">
    <property type="entry name" value="PRK05888.1-3"/>
    <property type="match status" value="1"/>
</dbReference>
<dbReference type="PANTHER" id="PTHR47275">
    <property type="entry name" value="NAD(P)H-QUINONE OXIDOREDUCTASE SUBUNIT I, CHLOROPLASTIC"/>
    <property type="match status" value="1"/>
</dbReference>
<dbReference type="PANTHER" id="PTHR47275:SF1">
    <property type="entry name" value="NAD(P)H-QUINONE OXIDOREDUCTASE SUBUNIT I, CHLOROPLASTIC"/>
    <property type="match status" value="1"/>
</dbReference>
<dbReference type="Pfam" id="PF00037">
    <property type="entry name" value="Fer4"/>
    <property type="match status" value="2"/>
</dbReference>
<dbReference type="SUPFAM" id="SSF54862">
    <property type="entry name" value="4Fe-4S ferredoxins"/>
    <property type="match status" value="1"/>
</dbReference>
<dbReference type="PROSITE" id="PS00198">
    <property type="entry name" value="4FE4S_FER_1"/>
    <property type="match status" value="2"/>
</dbReference>
<dbReference type="PROSITE" id="PS51379">
    <property type="entry name" value="4FE4S_FER_2"/>
    <property type="match status" value="2"/>
</dbReference>
<keyword id="KW-0004">4Fe-4S</keyword>
<keyword id="KW-0150">Chloroplast</keyword>
<keyword id="KW-0408">Iron</keyword>
<keyword id="KW-0411">Iron-sulfur</keyword>
<keyword id="KW-0472">Membrane</keyword>
<keyword id="KW-0479">Metal-binding</keyword>
<keyword id="KW-0520">NAD</keyword>
<keyword id="KW-0521">NADP</keyword>
<keyword id="KW-0934">Plastid</keyword>
<keyword id="KW-0618">Plastoquinone</keyword>
<keyword id="KW-0874">Quinone</keyword>
<keyword id="KW-0677">Repeat</keyword>
<keyword id="KW-0793">Thylakoid</keyword>
<keyword id="KW-1278">Translocase</keyword>
<organism>
    <name type="scientific">Melampodium leucanthum</name>
    <name type="common">Black foot daisy</name>
    <dbReference type="NCBI Taxonomy" id="183048"/>
    <lineage>
        <taxon>Eukaryota</taxon>
        <taxon>Viridiplantae</taxon>
        <taxon>Streptophyta</taxon>
        <taxon>Embryophyta</taxon>
        <taxon>Tracheophyta</taxon>
        <taxon>Spermatophyta</taxon>
        <taxon>Magnoliopsida</taxon>
        <taxon>eudicotyledons</taxon>
        <taxon>Gunneridae</taxon>
        <taxon>Pentapetalae</taxon>
        <taxon>asterids</taxon>
        <taxon>campanulids</taxon>
        <taxon>Asterales</taxon>
        <taxon>Asteraceae</taxon>
        <taxon>Asteroideae</taxon>
        <taxon>Heliantheae alliance</taxon>
        <taxon>Millerieae</taxon>
        <taxon>Melampodium</taxon>
    </lineage>
</organism>
<gene>
    <name evidence="1" type="primary">ndhI</name>
</gene>
<proteinExistence type="inferred from homology"/>
<protein>
    <recommendedName>
        <fullName evidence="1">NAD(P)H-quinone oxidoreductase subunit I, chloroplastic</fullName>
        <ecNumber evidence="1">7.1.1.-</ecNumber>
    </recommendedName>
    <alternativeName>
        <fullName evidence="1">NAD(P)H dehydrogenase subunit I</fullName>
        <shortName evidence="1">NDH subunit I</shortName>
    </alternativeName>
    <alternativeName>
        <fullName evidence="1">NADH-plastoquinone oxidoreductase subunit I</fullName>
    </alternativeName>
</protein>
<evidence type="ECO:0000255" key="1">
    <source>
        <dbReference type="HAMAP-Rule" id="MF_01351"/>
    </source>
</evidence>
<accession>Q8HVP6</accession>
<reference key="1">
    <citation type="submission" date="2003-01" db="EMBL/GenBank/DDBJ databases">
        <title>Chloroplast DNA phylogeny of tribe Heliantheae (Asteraceae).</title>
        <authorList>
            <person name="Panero J.L."/>
            <person name="Baldwin B.G."/>
            <person name="Schilling E.E."/>
            <person name="Clevinger J.A."/>
        </authorList>
    </citation>
    <scope>NUCLEOTIDE SEQUENCE [GENOMIC DNA]</scope>
</reference>